<feature type="chain" id="PRO_0000177015" description="Flagellar hook-associated protein 2">
    <location>
        <begin position="1"/>
        <end position="665"/>
    </location>
</feature>
<feature type="coiled-coil region" evidence="2">
    <location>
        <begin position="602"/>
        <end position="658"/>
    </location>
</feature>
<feature type="sequence variant" description="In strain: 212.">
    <original>G</original>
    <variation>R</variation>
    <location>
        <position position="126"/>
    </location>
</feature>
<feature type="sequence variant" description="In strain: 212.">
    <original>N</original>
    <variation>D</variation>
    <location>
        <position position="227"/>
    </location>
</feature>
<feature type="sequence variant" description="In strain: 212.">
    <original>V</original>
    <variation>I</variation>
    <location>
        <position position="264"/>
    </location>
</feature>
<feature type="sequence variant" description="In strain: 212.">
    <location>
        <position position="284"/>
    </location>
</feature>
<feature type="sequence variant" description="In strain: 212.">
    <original>D</original>
    <variation>A</variation>
    <location>
        <position position="289"/>
    </location>
</feature>
<feature type="sequence variant" description="In strain: 212.">
    <original>D</original>
    <variation>S</variation>
    <location>
        <position position="304"/>
    </location>
</feature>
<feature type="sequence variant" description="In strain: 212.">
    <original>E</original>
    <variation>P</variation>
    <location>
        <position position="310"/>
    </location>
</feature>
<feature type="sequence variant" description="In strain: 212.">
    <original>NV</original>
    <variation>KL</variation>
    <location>
        <begin position="370"/>
        <end position="371"/>
    </location>
</feature>
<feature type="sequence variant" description="In strain: 212.">
    <original>P</original>
    <variation>A</variation>
    <location>
        <position position="424"/>
    </location>
</feature>
<feature type="sequence variant" description="In strain: 212.">
    <original>T</original>
    <variation>A</variation>
    <location>
        <position position="480"/>
    </location>
</feature>
<feature type="sequence conflict" description="In Ref. 2." evidence="3" ref="2">
    <original>VFLSSNFDPKKVTIPEG</original>
    <variation>CFCLQILILKKLQSQR</variation>
    <location>
        <begin position="110"/>
        <end position="126"/>
    </location>
</feature>
<reference key="1">
    <citation type="journal article" date="1997" name="Nature">
        <title>Genomic sequence of a Lyme disease spirochaete, Borrelia burgdorferi.</title>
        <authorList>
            <person name="Fraser C.M."/>
            <person name="Casjens S."/>
            <person name="Huang W.M."/>
            <person name="Sutton G.G."/>
            <person name="Clayton R.A."/>
            <person name="Lathigra R."/>
            <person name="White O."/>
            <person name="Ketchum K.A."/>
            <person name="Dodson R.J."/>
            <person name="Hickey E.K."/>
            <person name="Gwinn M.L."/>
            <person name="Dougherty B.A."/>
            <person name="Tomb J.-F."/>
            <person name="Fleischmann R.D."/>
            <person name="Richardson D.L."/>
            <person name="Peterson J.D."/>
            <person name="Kerlavage A.R."/>
            <person name="Quackenbush J."/>
            <person name="Salzberg S.L."/>
            <person name="Hanson M."/>
            <person name="van Vugt R."/>
            <person name="Palmer N."/>
            <person name="Adams M.D."/>
            <person name="Gocayne J.D."/>
            <person name="Weidman J.F."/>
            <person name="Utterback T.R."/>
            <person name="Watthey L."/>
            <person name="McDonald L.A."/>
            <person name="Artiach P."/>
            <person name="Bowman C."/>
            <person name="Garland S.A."/>
            <person name="Fujii C."/>
            <person name="Cotton M.D."/>
            <person name="Horst K."/>
            <person name="Roberts K.M."/>
            <person name="Hatch B."/>
            <person name="Smith H.O."/>
            <person name="Venter J.C."/>
        </authorList>
    </citation>
    <scope>NUCLEOTIDE SEQUENCE [LARGE SCALE GENOMIC DNA]</scope>
    <source>
        <strain>ATCC 35210 / DSM 4680 / CIP 102532 / B31</strain>
    </source>
</reference>
<reference key="2">
    <citation type="journal article" date="1997" name="Microbiology">
        <title>The flgK motility operon of Borrelia burgdorferi is initiated by a sigma 70-like promoter.</title>
        <authorList>
            <person name="Ge Y."/>
            <person name="Old I.G."/>
            <person name="Saint-Girons I."/>
            <person name="Charon N.W."/>
        </authorList>
    </citation>
    <scope>NUCLEOTIDE SEQUENCE [GENOMIC DNA] OF 110-665</scope>
    <source>
        <strain>212</strain>
    </source>
</reference>
<protein>
    <recommendedName>
        <fullName>Flagellar hook-associated protein 2</fullName>
        <shortName>HAP2</shortName>
    </recommendedName>
    <alternativeName>
        <fullName>Filament cap protein</fullName>
    </alternativeName>
    <alternativeName>
        <fullName>Flagellar cap protein</fullName>
    </alternativeName>
</protein>
<proteinExistence type="inferred from homology"/>
<sequence>MASGFFVPGLESKYNTKEIRESMLKSDKAKIDSSFKKLESLEQEKSAWQLINRKISTLNSLAKELTSLNSPFNLMSGNSSNSEVLTLSTRYGSKNETHKLIVDQIASADVFLSSNFDPKKVTIPEGDYIFLVGKKEINVKSNGNIDLLVKDINNKGKGFLSAKIVKSDKNGNSRFVLQSLKEGKENKLVIKGEGLSFAKQIGILSELKTNFNPNLSDIVVNQSSSNNKLAFENNGLVLNPLSEVSIEIPEDIEITSRSKIKFEVKYFDTGLEEPDSKIIFNPGGATFKDAKVESEDSVVDLGSDLKTPLEKKYIQMNMVKICSKEGSLELPLINISNNFEEVEVDVGALSNLEEINIENKANNKVIVISNVEIFDPKNRDGHLPINAKSFAENAKIKFDGVDVERDSNVINDLVPNVTLSLKKPSSDMVEAKIEPDYEGIKRVLLDFIGAYNEVLAEINIVSSNEDQPNNQKSNIVEELTYLSDSQKEEAYKNLGILRSEFLLKNLKSKLESIIFKPYVTSDPNFSIINQMGVFTNSISSSGGLSRYLRLDEKKFDESIRNNIDNVRELFLYDLNGDRVYDNGIAKMLGDCLSPLVASGGVIYNKIKNYDLKIFNQKNKVEDYKKKYEDRERKVEGELNTLDFTVKRMKDQENTLKAFDFNQRNK</sequence>
<dbReference type="EMBL" id="AE000783">
    <property type="status" value="NOT_ANNOTATED_CDS"/>
    <property type="molecule type" value="Genomic_DNA"/>
</dbReference>
<dbReference type="EMBL" id="U66699">
    <property type="protein sequence ID" value="AAB58986.1"/>
    <property type="molecule type" value="Genomic_DNA"/>
</dbReference>
<dbReference type="PIR" id="E70118">
    <property type="entry name" value="E70118"/>
</dbReference>
<dbReference type="RefSeq" id="WP_002659773.1">
    <property type="nucleotide sequence ID" value="NC_001318.1"/>
</dbReference>
<dbReference type="RefSeq" id="YP_008686561.1">
    <property type="nucleotide sequence ID" value="NC_001318.1"/>
</dbReference>
<dbReference type="SMR" id="O51173"/>
<dbReference type="PATRIC" id="fig|224326.49.peg.547"/>
<dbReference type="OrthoDB" id="349896at2"/>
<dbReference type="Proteomes" id="UP000001807">
    <property type="component" value="Chromosome"/>
</dbReference>
<dbReference type="GO" id="GO:0009421">
    <property type="term" value="C:bacterial-type flagellum filament cap"/>
    <property type="evidence" value="ECO:0007669"/>
    <property type="project" value="InterPro"/>
</dbReference>
<dbReference type="GO" id="GO:0009424">
    <property type="term" value="C:bacterial-type flagellum hook"/>
    <property type="evidence" value="ECO:0007669"/>
    <property type="project" value="InterPro"/>
</dbReference>
<dbReference type="GO" id="GO:0055040">
    <property type="term" value="C:periplasmic flagellum"/>
    <property type="evidence" value="ECO:0007669"/>
    <property type="project" value="UniProtKB-SubCell"/>
</dbReference>
<dbReference type="GO" id="GO:0071973">
    <property type="term" value="P:bacterial-type flagellum-dependent cell motility"/>
    <property type="evidence" value="ECO:0007669"/>
    <property type="project" value="TreeGrafter"/>
</dbReference>
<dbReference type="GO" id="GO:0007155">
    <property type="term" value="P:cell adhesion"/>
    <property type="evidence" value="ECO:0007669"/>
    <property type="project" value="InterPro"/>
</dbReference>
<dbReference type="InterPro" id="IPR040026">
    <property type="entry name" value="FliD"/>
</dbReference>
<dbReference type="InterPro" id="IPR010809">
    <property type="entry name" value="FliD_C"/>
</dbReference>
<dbReference type="InterPro" id="IPR003481">
    <property type="entry name" value="FliD_N"/>
</dbReference>
<dbReference type="NCBIfam" id="NF005188">
    <property type="entry name" value="PRK06664.1"/>
    <property type="match status" value="1"/>
</dbReference>
<dbReference type="PANTHER" id="PTHR30288">
    <property type="entry name" value="FLAGELLAR CAP/ASSEMBLY PROTEIN FLID"/>
    <property type="match status" value="1"/>
</dbReference>
<dbReference type="PANTHER" id="PTHR30288:SF0">
    <property type="entry name" value="FLAGELLAR HOOK-ASSOCIATED PROTEIN 2"/>
    <property type="match status" value="1"/>
</dbReference>
<dbReference type="Pfam" id="PF07195">
    <property type="entry name" value="FliD_C"/>
    <property type="match status" value="1"/>
</dbReference>
<dbReference type="Pfam" id="PF02465">
    <property type="entry name" value="FliD_N"/>
    <property type="match status" value="1"/>
</dbReference>
<gene>
    <name type="primary">fliD</name>
    <name type="ordered locus">BB_0149</name>
</gene>
<comment type="function">
    <text evidence="1">Required for the morphogenesis and for the elongation of the flagellar filament by facilitating polymerization of the flagellin monomers at the tip of growing filament. Forms a capping structure, which prevents flagellin subunits (transported through the central channel of the flagellum) from leaking out without polymerization at the distal end (By similarity).</text>
</comment>
<comment type="subunit">
    <text evidence="1">Homopentamer.</text>
</comment>
<comment type="subcellular location">
    <subcellularLocation>
        <location>Periplasmic flagellum</location>
    </subcellularLocation>
    <subcellularLocation>
        <location>Periplasm</location>
    </subcellularLocation>
</comment>
<comment type="similarity">
    <text evidence="3">Belongs to the FliD family.</text>
</comment>
<evidence type="ECO:0000250" key="1"/>
<evidence type="ECO:0000255" key="2"/>
<evidence type="ECO:0000305" key="3"/>
<organism>
    <name type="scientific">Borreliella burgdorferi (strain ATCC 35210 / DSM 4680 / CIP 102532 / B31)</name>
    <name type="common">Borrelia burgdorferi</name>
    <dbReference type="NCBI Taxonomy" id="224326"/>
    <lineage>
        <taxon>Bacteria</taxon>
        <taxon>Pseudomonadati</taxon>
        <taxon>Spirochaetota</taxon>
        <taxon>Spirochaetia</taxon>
        <taxon>Spirochaetales</taxon>
        <taxon>Borreliaceae</taxon>
        <taxon>Borreliella</taxon>
    </lineage>
</organism>
<keyword id="KW-0975">Bacterial flagellum</keyword>
<keyword id="KW-0175">Coiled coil</keyword>
<keyword id="KW-0574">Periplasm</keyword>
<keyword id="KW-1185">Reference proteome</keyword>
<accession>O51173</accession>
<accession>P94264</accession>
<name>FLID_BORBU</name>